<sequence>MREYDIVVIGSGPGGQKAAIASAKLGKSVAIVERGRMLGGVCVNTGTIPSKTLREAVLYLTGMNQRELYGASYRVKDRITPADLLARTQHVIGKEVDVVRNQLMRNRVDLIVGHGRFIDPHTILVEDQARREKTTVTGDYIIIATGTRPARPSGVEFDEERVLDSDGILDLKSLPSSMVVVGAGVIGIEYASMFAALGTKVTVVEKRDNMLDFCDPEVVEALKFHLRDLAVTFRFGEEVTAVDVGSAGTVTTLASGKQIPAETVMYSAGRQGQTDHLDLHNAGLEVQGRGRIFVDDRFQTKVDHIYAVGDVIGFPALAATSMEQGRLAAYHAFGEPTDGITELQPIGIYSIPEVSYVGATEVELTKSSIPYEVGVARYRELARGQIAGDSYGMLKLLVSTEDLKLLGVHIFGTSATEMVHIGQAVMGCGGSVEYLVDAVFNYPTFSEAYKNAALDVMNKMRALNQFRR</sequence>
<dbReference type="EC" id="1.6.1.1" evidence="1"/>
<dbReference type="EMBL" id="CP000611">
    <property type="protein sequence ID" value="ABQ74515.1"/>
    <property type="molecule type" value="Genomic_DNA"/>
</dbReference>
<dbReference type="RefSeq" id="WP_003900556.1">
    <property type="nucleotide sequence ID" value="NZ_CP016972.1"/>
</dbReference>
<dbReference type="SMR" id="A5U665"/>
<dbReference type="GeneID" id="45426700"/>
<dbReference type="KEGG" id="mra:MRA_2741"/>
<dbReference type="eggNOG" id="COG1249">
    <property type="taxonomic scope" value="Bacteria"/>
</dbReference>
<dbReference type="HOGENOM" id="CLU_016755_0_0_11"/>
<dbReference type="Proteomes" id="UP000001988">
    <property type="component" value="Chromosome"/>
</dbReference>
<dbReference type="GO" id="GO:0005829">
    <property type="term" value="C:cytosol"/>
    <property type="evidence" value="ECO:0007669"/>
    <property type="project" value="TreeGrafter"/>
</dbReference>
<dbReference type="GO" id="GO:0004148">
    <property type="term" value="F:dihydrolipoyl dehydrogenase (NADH) activity"/>
    <property type="evidence" value="ECO:0007669"/>
    <property type="project" value="TreeGrafter"/>
</dbReference>
<dbReference type="GO" id="GO:0050660">
    <property type="term" value="F:flavin adenine dinucleotide binding"/>
    <property type="evidence" value="ECO:0007669"/>
    <property type="project" value="TreeGrafter"/>
</dbReference>
<dbReference type="GO" id="GO:0003957">
    <property type="term" value="F:NAD(P)+ transhydrogenase (Si-specific) activity"/>
    <property type="evidence" value="ECO:0007669"/>
    <property type="project" value="UniProtKB-UniRule"/>
</dbReference>
<dbReference type="GO" id="GO:0006103">
    <property type="term" value="P:2-oxoglutarate metabolic process"/>
    <property type="evidence" value="ECO:0007669"/>
    <property type="project" value="TreeGrafter"/>
</dbReference>
<dbReference type="GO" id="GO:0006739">
    <property type="term" value="P:NADP metabolic process"/>
    <property type="evidence" value="ECO:0007669"/>
    <property type="project" value="UniProtKB-UniRule"/>
</dbReference>
<dbReference type="FunFam" id="3.30.390.30:FF:000001">
    <property type="entry name" value="Dihydrolipoyl dehydrogenase"/>
    <property type="match status" value="1"/>
</dbReference>
<dbReference type="FunFam" id="3.50.50.60:FF:000008">
    <property type="entry name" value="Soluble pyridine nucleotide transhydrogenase"/>
    <property type="match status" value="1"/>
</dbReference>
<dbReference type="Gene3D" id="3.30.390.30">
    <property type="match status" value="1"/>
</dbReference>
<dbReference type="Gene3D" id="3.50.50.60">
    <property type="entry name" value="FAD/NAD(P)-binding domain"/>
    <property type="match status" value="2"/>
</dbReference>
<dbReference type="HAMAP" id="MF_00247">
    <property type="entry name" value="SthA"/>
    <property type="match status" value="1"/>
</dbReference>
<dbReference type="InterPro" id="IPR050151">
    <property type="entry name" value="Class-I_Pyr_Nuc-Dis_Oxidored"/>
</dbReference>
<dbReference type="InterPro" id="IPR036188">
    <property type="entry name" value="FAD/NAD-bd_sf"/>
</dbReference>
<dbReference type="InterPro" id="IPR023753">
    <property type="entry name" value="FAD/NAD-binding_dom"/>
</dbReference>
<dbReference type="InterPro" id="IPR016156">
    <property type="entry name" value="FAD/NAD-linked_Rdtase_dimer_sf"/>
</dbReference>
<dbReference type="InterPro" id="IPR001100">
    <property type="entry name" value="Pyr_nuc-diS_OxRdtase"/>
</dbReference>
<dbReference type="InterPro" id="IPR004099">
    <property type="entry name" value="Pyr_nucl-diS_OxRdtase_dimer"/>
</dbReference>
<dbReference type="InterPro" id="IPR022962">
    <property type="entry name" value="STH_gammaproteobact"/>
</dbReference>
<dbReference type="NCBIfam" id="NF003585">
    <property type="entry name" value="PRK05249.1"/>
    <property type="match status" value="1"/>
</dbReference>
<dbReference type="PANTHER" id="PTHR22912">
    <property type="entry name" value="DISULFIDE OXIDOREDUCTASE"/>
    <property type="match status" value="1"/>
</dbReference>
<dbReference type="PANTHER" id="PTHR22912:SF93">
    <property type="entry name" value="SOLUBLE PYRIDINE NUCLEOTIDE TRANSHYDROGENASE"/>
    <property type="match status" value="1"/>
</dbReference>
<dbReference type="Pfam" id="PF07992">
    <property type="entry name" value="Pyr_redox_2"/>
    <property type="match status" value="1"/>
</dbReference>
<dbReference type="Pfam" id="PF02852">
    <property type="entry name" value="Pyr_redox_dim"/>
    <property type="match status" value="1"/>
</dbReference>
<dbReference type="PIRSF" id="PIRSF000350">
    <property type="entry name" value="Mercury_reductase_MerA"/>
    <property type="match status" value="1"/>
</dbReference>
<dbReference type="PRINTS" id="PR00368">
    <property type="entry name" value="FADPNR"/>
</dbReference>
<dbReference type="PRINTS" id="PR00411">
    <property type="entry name" value="PNDRDTASEI"/>
</dbReference>
<dbReference type="SUPFAM" id="SSF51905">
    <property type="entry name" value="FAD/NAD(P)-binding domain"/>
    <property type="match status" value="1"/>
</dbReference>
<dbReference type="SUPFAM" id="SSF55424">
    <property type="entry name" value="FAD/NAD-linked reductases, dimerisation (C-terminal) domain"/>
    <property type="match status" value="1"/>
</dbReference>
<keyword id="KW-0963">Cytoplasm</keyword>
<keyword id="KW-0274">FAD</keyword>
<keyword id="KW-0285">Flavoprotein</keyword>
<keyword id="KW-0520">NAD</keyword>
<keyword id="KW-0521">NADP</keyword>
<keyword id="KW-0560">Oxidoreductase</keyword>
<keyword id="KW-1185">Reference proteome</keyword>
<accession>A5U665</accession>
<evidence type="ECO:0000255" key="1">
    <source>
        <dbReference type="HAMAP-Rule" id="MF_00247"/>
    </source>
</evidence>
<comment type="function">
    <text evidence="1">Conversion of NADPH, generated by peripheral catabolic pathways, to NADH, which can enter the respiratory chain for energy generation.</text>
</comment>
<comment type="catalytic activity">
    <reaction evidence="1">
        <text>NAD(+) + NADPH = NADH + NADP(+)</text>
        <dbReference type="Rhea" id="RHEA:11692"/>
        <dbReference type="ChEBI" id="CHEBI:57540"/>
        <dbReference type="ChEBI" id="CHEBI:57783"/>
        <dbReference type="ChEBI" id="CHEBI:57945"/>
        <dbReference type="ChEBI" id="CHEBI:58349"/>
        <dbReference type="EC" id="1.6.1.1"/>
    </reaction>
</comment>
<comment type="cofactor">
    <cofactor evidence="1">
        <name>FAD</name>
        <dbReference type="ChEBI" id="CHEBI:57692"/>
    </cofactor>
    <text evidence="1">Binds 1 FAD per subunit.</text>
</comment>
<comment type="subcellular location">
    <subcellularLocation>
        <location evidence="1">Cytoplasm</location>
    </subcellularLocation>
</comment>
<comment type="similarity">
    <text evidence="1">Belongs to the class-I pyridine nucleotide-disulfide oxidoreductase family.</text>
</comment>
<feature type="chain" id="PRO_1000012560" description="Soluble pyridine nucleotide transhydrogenase">
    <location>
        <begin position="1"/>
        <end position="468"/>
    </location>
</feature>
<feature type="binding site" evidence="1">
    <location>
        <begin position="33"/>
        <end position="42"/>
    </location>
    <ligand>
        <name>FAD</name>
        <dbReference type="ChEBI" id="CHEBI:57692"/>
    </ligand>
</feature>
<reference key="1">
    <citation type="journal article" date="2008" name="PLoS ONE">
        <title>Genetic basis of virulence attenuation revealed by comparative genomic analysis of Mycobacterium tuberculosis strain H37Ra versus H37Rv.</title>
        <authorList>
            <person name="Zheng H."/>
            <person name="Lu L."/>
            <person name="Wang B."/>
            <person name="Pu S."/>
            <person name="Zhang X."/>
            <person name="Zhu G."/>
            <person name="Shi W."/>
            <person name="Zhang L."/>
            <person name="Wang H."/>
            <person name="Wang S."/>
            <person name="Zhao G."/>
            <person name="Zhang Y."/>
        </authorList>
    </citation>
    <scope>NUCLEOTIDE SEQUENCE [LARGE SCALE GENOMIC DNA]</scope>
    <source>
        <strain>ATCC 25177 / H37Ra</strain>
    </source>
</reference>
<name>STHA_MYCTA</name>
<organism>
    <name type="scientific">Mycobacterium tuberculosis (strain ATCC 25177 / H37Ra)</name>
    <dbReference type="NCBI Taxonomy" id="419947"/>
    <lineage>
        <taxon>Bacteria</taxon>
        <taxon>Bacillati</taxon>
        <taxon>Actinomycetota</taxon>
        <taxon>Actinomycetes</taxon>
        <taxon>Mycobacteriales</taxon>
        <taxon>Mycobacteriaceae</taxon>
        <taxon>Mycobacterium</taxon>
        <taxon>Mycobacterium tuberculosis complex</taxon>
    </lineage>
</organism>
<gene>
    <name evidence="1" type="primary">sthA</name>
    <name type="ordered locus">MRA_2741</name>
</gene>
<protein>
    <recommendedName>
        <fullName evidence="1">Soluble pyridine nucleotide transhydrogenase</fullName>
        <shortName evidence="1">STH</shortName>
        <ecNumber evidence="1">1.6.1.1</ecNumber>
    </recommendedName>
    <alternativeName>
        <fullName evidence="1">NAD(P)(+) transhydrogenase [B-specific]</fullName>
    </alternativeName>
</protein>
<proteinExistence type="inferred from homology"/>